<gene>
    <name type="primary">TPP1</name>
</gene>
<reference key="1">
    <citation type="journal article" date="2001" name="J. Biol. Chem.">
        <title>Uncoupling of 3'-phosphatase and 5'-kinase functions in budding yeast. Characterization of Saccharomyces cerevisiae DNA 3'-phosphatase (TPP1).</title>
        <authorList>
            <person name="Vance J.R."/>
            <person name="Wilson T.E."/>
        </authorList>
    </citation>
    <scope>NUCLEOTIDE SEQUENCE [GENOMIC DNA]</scope>
    <source>
        <strain>ATCC MYA-4448 / CBS 8839 / NBRC 1815 / NCYC 2888</strain>
    </source>
</reference>
<evidence type="ECO:0000305" key="1"/>
<comment type="function">
    <text>Dephosphorylate DNA's 3'-phosphate termini. Has a role in the repair of breaks in single-stranded DNA.</text>
</comment>
<comment type="catalytic activity">
    <reaction>
        <text>a 3'end (2'-deoxyribonucleotide 3'-phosphate)-DNA + H2O = a 3'-end 2'-deoxyribonucleotide-DNA + phosphate</text>
        <dbReference type="Rhea" id="RHEA:14113"/>
        <dbReference type="Rhea" id="RHEA-COMP:13863"/>
        <dbReference type="Rhea" id="RHEA-COMP:13864"/>
        <dbReference type="ChEBI" id="CHEBI:15377"/>
        <dbReference type="ChEBI" id="CHEBI:43474"/>
        <dbReference type="ChEBI" id="CHEBI:138147"/>
        <dbReference type="ChEBI" id="CHEBI:138148"/>
        <dbReference type="EC" id="3.1.3.32"/>
    </reaction>
</comment>
<comment type="subcellular location">
    <subcellularLocation>
        <location evidence="1">Nucleus</location>
    </subcellularLocation>
</comment>
<comment type="similarity">
    <text evidence="1">Belongs to the DNA 3' phosphatase family.</text>
</comment>
<dbReference type="EC" id="3.1.3.32"/>
<dbReference type="EMBL" id="AF326782">
    <property type="protein sequence ID" value="AAG45938.1"/>
    <property type="molecule type" value="Genomic_DNA"/>
</dbReference>
<dbReference type="SMR" id="Q9HET9"/>
<dbReference type="BRENDA" id="3.1.3.32">
    <property type="organism ID" value="6902"/>
</dbReference>
<dbReference type="GO" id="GO:0005634">
    <property type="term" value="C:nucleus"/>
    <property type="evidence" value="ECO:0007669"/>
    <property type="project" value="UniProtKB-SubCell"/>
</dbReference>
<dbReference type="GO" id="GO:0046404">
    <property type="term" value="F:ATP-dependent polydeoxyribonucleotide 5'-hydroxyl-kinase activity"/>
    <property type="evidence" value="ECO:0007669"/>
    <property type="project" value="TreeGrafter"/>
</dbReference>
<dbReference type="GO" id="GO:0003690">
    <property type="term" value="F:double-stranded DNA binding"/>
    <property type="evidence" value="ECO:0007669"/>
    <property type="project" value="TreeGrafter"/>
</dbReference>
<dbReference type="GO" id="GO:0046403">
    <property type="term" value="F:polynucleotide 3'-phosphatase activity"/>
    <property type="evidence" value="ECO:0007669"/>
    <property type="project" value="UniProtKB-EC"/>
</dbReference>
<dbReference type="GO" id="GO:0006281">
    <property type="term" value="P:DNA repair"/>
    <property type="evidence" value="ECO:0007669"/>
    <property type="project" value="UniProtKB-KW"/>
</dbReference>
<dbReference type="Gene3D" id="3.40.50.1000">
    <property type="entry name" value="HAD superfamily/HAD-like"/>
    <property type="match status" value="1"/>
</dbReference>
<dbReference type="InterPro" id="IPR036412">
    <property type="entry name" value="HAD-like_sf"/>
</dbReference>
<dbReference type="InterPro" id="IPR023214">
    <property type="entry name" value="HAD_sf"/>
</dbReference>
<dbReference type="InterPro" id="IPR013954">
    <property type="entry name" value="PNK3P"/>
</dbReference>
<dbReference type="InterPro" id="IPR006551">
    <property type="entry name" value="Polynucleotide_phosphatase"/>
</dbReference>
<dbReference type="NCBIfam" id="TIGR01664">
    <property type="entry name" value="DNA-3'-Pase"/>
    <property type="match status" value="1"/>
</dbReference>
<dbReference type="PANTHER" id="PTHR12083">
    <property type="entry name" value="BIFUNCTIONAL POLYNUCLEOTIDE PHOSPHATASE/KINASE"/>
    <property type="match status" value="1"/>
</dbReference>
<dbReference type="PANTHER" id="PTHR12083:SF9">
    <property type="entry name" value="BIFUNCTIONAL POLYNUCLEOTIDE PHOSPHATASE_KINASE"/>
    <property type="match status" value="1"/>
</dbReference>
<dbReference type="Pfam" id="PF08645">
    <property type="entry name" value="PNK3P"/>
    <property type="match status" value="1"/>
</dbReference>
<dbReference type="SUPFAM" id="SSF56784">
    <property type="entry name" value="HAD-like"/>
    <property type="match status" value="1"/>
</dbReference>
<organism>
    <name type="scientific">Saccharomyces mikatae</name>
    <name type="common">Yeast</name>
    <dbReference type="NCBI Taxonomy" id="114525"/>
    <lineage>
        <taxon>Eukaryota</taxon>
        <taxon>Fungi</taxon>
        <taxon>Dikarya</taxon>
        <taxon>Ascomycota</taxon>
        <taxon>Saccharomycotina</taxon>
        <taxon>Saccharomycetes</taxon>
        <taxon>Saccharomycetales</taxon>
        <taxon>Saccharomycetaceae</taxon>
        <taxon>Saccharomyces</taxon>
    </lineage>
</organism>
<feature type="chain" id="PRO_0000065579" description="Polynucleotide 3'-phosphatase">
    <location>
        <begin position="1"/>
        <end position="245"/>
    </location>
</feature>
<accession>Q9HET9</accession>
<keyword id="KW-0227">DNA damage</keyword>
<keyword id="KW-0234">DNA repair</keyword>
<keyword id="KW-0378">Hydrolase</keyword>
<keyword id="KW-0539">Nucleus</keyword>
<sequence>MKTEGRQMPHKSTILPFLIKFAPNSPQFTYDCDQCLNVYAFDLDHTIIKPKSPNAKYSRSANDWQFMNFDSKKSTLDYLFSITDNDLAAVIVIFSNQGGVITVPRTSKSCSKYINKISLFLKAIENDKRGEKLSPRLWIYAAPKRPKTVVTNNKKITFPSLCKSYNNDPEIFEKVRKPMTGMADFFRIDITDACRVLKTVPPIKLNWVYYCGDAAGRKNDFSDSDIKFAEKLHVEFKYPEEVFQG</sequence>
<proteinExistence type="inferred from homology"/>
<name>TPP1_SACMI</name>
<protein>
    <recommendedName>
        <fullName>Polynucleotide 3'-phosphatase</fullName>
        <ecNumber>3.1.3.32</ecNumber>
    </recommendedName>
    <alternativeName>
        <fullName>2'(3')-polynucleotidase</fullName>
    </alternativeName>
    <alternativeName>
        <fullName>DNA 3'-phosphatase</fullName>
    </alternativeName>
    <alternativeName>
        <fullName>Three prime phosphatase</fullName>
    </alternativeName>
</protein>